<feature type="chain" id="PRO_0000407706" description="Phosphate propanoyltransferase">
    <location>
        <begin position="1"/>
        <end position="211"/>
    </location>
</feature>
<feature type="binding site" evidence="1">
    <location>
        <begin position="30"/>
        <end position="32"/>
    </location>
    <ligand>
        <name>CoA</name>
        <dbReference type="ChEBI" id="CHEBI:57287"/>
    </ligand>
</feature>
<feature type="binding site" evidence="1">
    <location>
        <position position="34"/>
    </location>
    <ligand>
        <name>Zn(2+)</name>
        <dbReference type="ChEBI" id="CHEBI:29105"/>
        <label>1</label>
    </ligand>
</feature>
<feature type="binding site" evidence="1">
    <location>
        <position position="36"/>
    </location>
    <ligand>
        <name>Zn(2+)</name>
        <dbReference type="ChEBI" id="CHEBI:29105"/>
        <label>1</label>
    </ligand>
</feature>
<feature type="binding site" evidence="1">
    <location>
        <position position="76"/>
    </location>
    <ligand>
        <name>CoA</name>
        <dbReference type="ChEBI" id="CHEBI:57287"/>
    </ligand>
</feature>
<feature type="binding site" evidence="1">
    <location>
        <position position="89"/>
    </location>
    <ligand>
        <name>phosphate</name>
        <dbReference type="ChEBI" id="CHEBI:43474"/>
    </ligand>
</feature>
<feature type="binding site" evidence="1">
    <location>
        <position position="95"/>
    </location>
    <ligand>
        <name>Zn(2+)</name>
        <dbReference type="ChEBI" id="CHEBI:29105"/>
        <label>1</label>
    </ligand>
</feature>
<feature type="binding site" evidence="1">
    <location>
        <position position="143"/>
    </location>
    <ligand>
        <name>Zn(2+)</name>
        <dbReference type="ChEBI" id="CHEBI:29105"/>
        <label>2</label>
    </ligand>
</feature>
<feature type="binding site" evidence="1">
    <location>
        <position position="145"/>
    </location>
    <ligand>
        <name>Zn(2+)</name>
        <dbReference type="ChEBI" id="CHEBI:29105"/>
        <label>2</label>
    </ligand>
</feature>
<feature type="binding site" evidence="1">
    <location>
        <position position="190"/>
    </location>
    <ligand>
        <name>Zn(2+)</name>
        <dbReference type="ChEBI" id="CHEBI:29105"/>
        <label>2</label>
    </ligand>
</feature>
<feature type="binding site" evidence="1">
    <location>
        <position position="197"/>
    </location>
    <ligand>
        <name>CoA</name>
        <dbReference type="ChEBI" id="CHEBI:57287"/>
    </ligand>
</feature>
<organism>
    <name type="scientific">Enterococcus faecalis (strain ATCC 700802 / V583)</name>
    <dbReference type="NCBI Taxonomy" id="226185"/>
    <lineage>
        <taxon>Bacteria</taxon>
        <taxon>Bacillati</taxon>
        <taxon>Bacillota</taxon>
        <taxon>Bacilli</taxon>
        <taxon>Lactobacillales</taxon>
        <taxon>Enterococcaceae</taxon>
        <taxon>Enterococcus</taxon>
    </lineage>
</organism>
<reference key="1">
    <citation type="journal article" date="2003" name="Science">
        <title>Role of mobile DNA in the evolution of vancomycin-resistant Enterococcus faecalis.</title>
        <authorList>
            <person name="Paulsen I.T."/>
            <person name="Banerjei L."/>
            <person name="Myers G.S.A."/>
            <person name="Nelson K.E."/>
            <person name="Seshadri R."/>
            <person name="Read T.D."/>
            <person name="Fouts D.E."/>
            <person name="Eisen J.A."/>
            <person name="Gill S.R."/>
            <person name="Heidelberg J.F."/>
            <person name="Tettelin H."/>
            <person name="Dodson R.J."/>
            <person name="Umayam L.A."/>
            <person name="Brinkac L.M."/>
            <person name="Beanan M.J."/>
            <person name="Daugherty S.C."/>
            <person name="DeBoy R.T."/>
            <person name="Durkin S.A."/>
            <person name="Kolonay J.F."/>
            <person name="Madupu R."/>
            <person name="Nelson W.C."/>
            <person name="Vamathevan J.J."/>
            <person name="Tran B."/>
            <person name="Upton J."/>
            <person name="Hansen T."/>
            <person name="Shetty J."/>
            <person name="Khouri H.M."/>
            <person name="Utterback T.R."/>
            <person name="Radune D."/>
            <person name="Ketchum K.A."/>
            <person name="Dougherty B.A."/>
            <person name="Fraser C.M."/>
        </authorList>
    </citation>
    <scope>NUCLEOTIDE SEQUENCE [LARGE SCALE GENOMIC DNA]</scope>
    <source>
        <strain>ATCC 700802 / V583</strain>
    </source>
</reference>
<proteinExistence type="inferred from homology"/>
<protein>
    <recommendedName>
        <fullName>Phosphate propanoyltransferase</fullName>
        <ecNumber>2.3.1.222</ecNumber>
    </recommendedName>
    <alternativeName>
        <fullName>Phosphate acyltransferase PduL</fullName>
    </alternativeName>
    <alternativeName>
        <fullName>Phosphotransacylase PduL</fullName>
        <shortName>PTAC</shortName>
    </alternativeName>
    <alternativeName>
        <fullName>Propanediol utilization protein PduL</fullName>
    </alternativeName>
</protein>
<keyword id="KW-0012">Acyltransferase</keyword>
<keyword id="KW-0963">Cytoplasm</keyword>
<keyword id="KW-0479">Metal-binding</keyword>
<keyword id="KW-1185">Reference proteome</keyword>
<keyword id="KW-0808">Transferase</keyword>
<keyword id="KW-0862">Zinc</keyword>
<evidence type="ECO:0000250" key="1">
    <source>
        <dbReference type="UniProtKB" id="Q21A54"/>
    </source>
</evidence>
<evidence type="ECO:0000250" key="2">
    <source>
        <dbReference type="UniProtKB" id="Q9XDN5"/>
    </source>
</evidence>
<evidence type="ECO:0000305" key="3"/>
<accession>Q834M4</accession>
<dbReference type="EC" id="2.3.1.222"/>
<dbReference type="EMBL" id="AE016830">
    <property type="protein sequence ID" value="AAO81404.1"/>
    <property type="molecule type" value="Genomic_DNA"/>
</dbReference>
<dbReference type="RefSeq" id="NP_815334.1">
    <property type="nucleotide sequence ID" value="NC_004668.1"/>
</dbReference>
<dbReference type="SMR" id="Q834M4"/>
<dbReference type="STRING" id="226185.EF_1621"/>
<dbReference type="EnsemblBacteria" id="AAO81404">
    <property type="protein sequence ID" value="AAO81404"/>
    <property type="gene ID" value="EF_1621"/>
</dbReference>
<dbReference type="KEGG" id="efa:EF1621"/>
<dbReference type="PATRIC" id="fig|226185.9.peg.1524"/>
<dbReference type="eggNOG" id="COG4869">
    <property type="taxonomic scope" value="Bacteria"/>
</dbReference>
<dbReference type="HOGENOM" id="CLU_080676_1_0_9"/>
<dbReference type="UniPathway" id="UPA00621"/>
<dbReference type="Proteomes" id="UP000001415">
    <property type="component" value="Chromosome"/>
</dbReference>
<dbReference type="GO" id="GO:0005737">
    <property type="term" value="C:cytoplasm"/>
    <property type="evidence" value="ECO:0007669"/>
    <property type="project" value="UniProtKB-SubCell"/>
</dbReference>
<dbReference type="GO" id="GO:0016747">
    <property type="term" value="F:acyltransferase activity, transferring groups other than amino-acyl groups"/>
    <property type="evidence" value="ECO:0007669"/>
    <property type="project" value="InterPro"/>
</dbReference>
<dbReference type="GO" id="GO:0046872">
    <property type="term" value="F:metal ion binding"/>
    <property type="evidence" value="ECO:0007669"/>
    <property type="project" value="UniProtKB-KW"/>
</dbReference>
<dbReference type="GO" id="GO:0051144">
    <property type="term" value="P:propanediol catabolic process"/>
    <property type="evidence" value="ECO:0007669"/>
    <property type="project" value="UniProtKB-UniPathway"/>
</dbReference>
<dbReference type="InterPro" id="IPR008300">
    <property type="entry name" value="PTAC"/>
</dbReference>
<dbReference type="NCBIfam" id="NF040837">
    <property type="entry name" value="BMC_EutD_Gpos"/>
    <property type="match status" value="1"/>
</dbReference>
<dbReference type="NCBIfam" id="NF011652">
    <property type="entry name" value="PRK15070.1"/>
    <property type="match status" value="1"/>
</dbReference>
<dbReference type="PANTHER" id="PTHR39453">
    <property type="entry name" value="PHOSPHATE PROPANOYLTRANSFERASE"/>
    <property type="match status" value="1"/>
</dbReference>
<dbReference type="PANTHER" id="PTHR39453:SF1">
    <property type="entry name" value="PHOSPHATE PROPANOYLTRANSFERASE"/>
    <property type="match status" value="1"/>
</dbReference>
<dbReference type="Pfam" id="PF06130">
    <property type="entry name" value="PTAC"/>
    <property type="match status" value="1"/>
</dbReference>
<dbReference type="PIRSF" id="PIRSF010130">
    <property type="entry name" value="PduL"/>
    <property type="match status" value="1"/>
</dbReference>
<comment type="function">
    <text evidence="2">Involved in 1,2-propanediol (1,2-PD) degradation by catalyzing the conversion of propanoyl-CoA to propanoyl-phosphate.</text>
</comment>
<comment type="catalytic activity">
    <reaction evidence="2">
        <text>propanoyl-CoA + phosphate = propanoyl phosphate + CoA</text>
        <dbReference type="Rhea" id="RHEA:28046"/>
        <dbReference type="ChEBI" id="CHEBI:43474"/>
        <dbReference type="ChEBI" id="CHEBI:57287"/>
        <dbReference type="ChEBI" id="CHEBI:57392"/>
        <dbReference type="ChEBI" id="CHEBI:58933"/>
        <dbReference type="EC" id="2.3.1.222"/>
    </reaction>
</comment>
<comment type="cofactor">
    <cofactor evidence="1">
        <name>Zn(2+)</name>
        <dbReference type="ChEBI" id="CHEBI:29105"/>
    </cofactor>
    <text evidence="1">There are 2 Zn(2+) ions per monomer; Zn(2+) and CoA bind inbetween the 2 domains in each monomer.</text>
</comment>
<comment type="pathway">
    <text>Polyol metabolism; 1,2-propanediol degradation.</text>
</comment>
<comment type="subcellular location">
    <subcellularLocation>
        <location evidence="3">Cytoplasm</location>
    </subcellularLocation>
</comment>
<comment type="domain">
    <text evidence="1">Formed by 2 beta-barrels, each is capped on both ends by short alpha-helices.</text>
</comment>
<comment type="similarity">
    <text evidence="3">Belongs to the PduL family.</text>
</comment>
<gene>
    <name type="primary">pduL</name>
    <name type="ordered locus">EF_1621</name>
</gene>
<name>PDUL_ENTFA</name>
<sequence length="211" mass="23309">MNKLDSMNEIVEEVVKRIQQQQQNTFEVEASGRHVHLSRQEIDALFGPGYQLTKVKDLSQPGQFVCKERITVAGPKGLFQNVVILGPERSESQVEVSMTDTRILGINAPVRESGKTEGTPGVTLMNGSAVVTLSHGLIVAKRHIHMTPEDALKNKVSNSQIVQVKVEGTRPLIFDDVVVRISPRFATYMHIDYDEANACGLTKGARGYILK</sequence>